<protein>
    <recommendedName>
        <fullName evidence="1">Autonomous glycyl radical cofactor</fullName>
    </recommendedName>
</protein>
<proteinExistence type="inferred from homology"/>
<organism>
    <name type="scientific">Vibrio vulnificus (strain YJ016)</name>
    <dbReference type="NCBI Taxonomy" id="196600"/>
    <lineage>
        <taxon>Bacteria</taxon>
        <taxon>Pseudomonadati</taxon>
        <taxon>Pseudomonadota</taxon>
        <taxon>Gammaproteobacteria</taxon>
        <taxon>Vibrionales</taxon>
        <taxon>Vibrionaceae</taxon>
        <taxon>Vibrio</taxon>
    </lineage>
</organism>
<evidence type="ECO:0000255" key="1">
    <source>
        <dbReference type="HAMAP-Rule" id="MF_00806"/>
    </source>
</evidence>
<evidence type="ECO:0000305" key="2"/>
<gene>
    <name evidence="1" type="primary">grcA</name>
    <name type="ordered locus">VV0653</name>
</gene>
<dbReference type="EMBL" id="BA000037">
    <property type="protein sequence ID" value="BAC93417.1"/>
    <property type="status" value="ALT_INIT"/>
    <property type="molecule type" value="Genomic_DNA"/>
</dbReference>
<dbReference type="RefSeq" id="WP_011078629.1">
    <property type="nucleotide sequence ID" value="NC_005139.1"/>
</dbReference>
<dbReference type="SMR" id="Q7MNR2"/>
<dbReference type="STRING" id="672.VV93_v1c05920"/>
<dbReference type="GeneID" id="93894854"/>
<dbReference type="KEGG" id="vvy:VV0653"/>
<dbReference type="eggNOG" id="COG3445">
    <property type="taxonomic scope" value="Bacteria"/>
</dbReference>
<dbReference type="HOGENOM" id="CLU_133780_0_0_6"/>
<dbReference type="Proteomes" id="UP000002675">
    <property type="component" value="Chromosome I"/>
</dbReference>
<dbReference type="GO" id="GO:0005829">
    <property type="term" value="C:cytosol"/>
    <property type="evidence" value="ECO:0007669"/>
    <property type="project" value="TreeGrafter"/>
</dbReference>
<dbReference type="GO" id="GO:0008861">
    <property type="term" value="F:formate C-acetyltransferase activity"/>
    <property type="evidence" value="ECO:0007669"/>
    <property type="project" value="TreeGrafter"/>
</dbReference>
<dbReference type="FunFam" id="3.20.70.20:FF:000002">
    <property type="entry name" value="Autonomous glycyl radical cofactor"/>
    <property type="match status" value="1"/>
</dbReference>
<dbReference type="Gene3D" id="3.20.70.20">
    <property type="match status" value="1"/>
</dbReference>
<dbReference type="HAMAP" id="MF_00806">
    <property type="entry name" value="GrcA"/>
    <property type="match status" value="1"/>
</dbReference>
<dbReference type="InterPro" id="IPR050244">
    <property type="entry name" value="Auton_GlycylRad_Cofactor"/>
</dbReference>
<dbReference type="InterPro" id="IPR019777">
    <property type="entry name" value="Form_AcTrfase_GR_CS"/>
</dbReference>
<dbReference type="InterPro" id="IPR001150">
    <property type="entry name" value="Gly_radical"/>
</dbReference>
<dbReference type="InterPro" id="IPR011140">
    <property type="entry name" value="Glycyl_radical_cofactor_GrcA"/>
</dbReference>
<dbReference type="NCBIfam" id="TIGR04365">
    <property type="entry name" value="spare_glycyl"/>
    <property type="match status" value="1"/>
</dbReference>
<dbReference type="PANTHER" id="PTHR30191">
    <property type="entry name" value="FORMATE ACETYLTRANSFERASE"/>
    <property type="match status" value="1"/>
</dbReference>
<dbReference type="PANTHER" id="PTHR30191:SF0">
    <property type="entry name" value="FORMATE ACETYLTRANSFERASE 1"/>
    <property type="match status" value="1"/>
</dbReference>
<dbReference type="Pfam" id="PF01228">
    <property type="entry name" value="Gly_radical"/>
    <property type="match status" value="1"/>
</dbReference>
<dbReference type="PIRSF" id="PIRSF000378">
    <property type="entry name" value="Gly_radicl_yfiD"/>
    <property type="match status" value="1"/>
</dbReference>
<dbReference type="SUPFAM" id="SSF51998">
    <property type="entry name" value="PFL-like glycyl radical enzymes"/>
    <property type="match status" value="1"/>
</dbReference>
<dbReference type="PROSITE" id="PS00850">
    <property type="entry name" value="GLY_RADICAL_1"/>
    <property type="match status" value="1"/>
</dbReference>
<dbReference type="PROSITE" id="PS51149">
    <property type="entry name" value="GLY_RADICAL_2"/>
    <property type="match status" value="1"/>
</dbReference>
<feature type="chain" id="PRO_0000166714" description="Autonomous glycyl radical cofactor">
    <location>
        <begin position="1"/>
        <end position="125"/>
    </location>
</feature>
<feature type="domain" description="Glycine radical" evidence="1">
    <location>
        <begin position="5"/>
        <end position="125"/>
    </location>
</feature>
<feature type="modified residue" description="Glycine radical" evidence="1">
    <location>
        <position position="100"/>
    </location>
</feature>
<sequence length="125" mass="13910">MIQGIQITKAANDDLLNSIWLLDSEKNEARCVAAVSGYEADQIVAINELGEFESREVAIEAAPRIEGGQHLNVNVLKRETLEDAVAHPEKYPQLTIRVSGYAVRFNSLTPEQQRDVIARTFTESL</sequence>
<accession>Q7MNR2</accession>
<comment type="function">
    <text evidence="1">Acts as a radical domain for damaged PFL and possibly other radical proteins.</text>
</comment>
<comment type="sequence caution" evidence="2">
    <conflict type="erroneous initiation">
        <sequence resource="EMBL-CDS" id="BAC93417"/>
    </conflict>
</comment>
<name>GRCA_VIBVY</name>
<reference key="1">
    <citation type="journal article" date="2003" name="Genome Res.">
        <title>Comparative genome analysis of Vibrio vulnificus, a marine pathogen.</title>
        <authorList>
            <person name="Chen C.-Y."/>
            <person name="Wu K.-M."/>
            <person name="Chang Y.-C."/>
            <person name="Chang C.-H."/>
            <person name="Tsai H.-C."/>
            <person name="Liao T.-L."/>
            <person name="Liu Y.-M."/>
            <person name="Chen H.-J."/>
            <person name="Shen A.B.-T."/>
            <person name="Li J.-C."/>
            <person name="Su T.-L."/>
            <person name="Shao C.-P."/>
            <person name="Lee C.-T."/>
            <person name="Hor L.-I."/>
            <person name="Tsai S.-F."/>
        </authorList>
    </citation>
    <scope>NUCLEOTIDE SEQUENCE [LARGE SCALE GENOMIC DNA]</scope>
    <source>
        <strain>YJ016</strain>
    </source>
</reference>
<keyword id="KW-0556">Organic radical</keyword>